<sequence length="434" mass="49371">MPNRRASRNAYYFFVQEKIPELRRRGLPVARVADAIPYCSADWALLREDEKEKYSEMAREWRAAQGKDSGPSEKQKLVSTPLRRPGMLVPKPSISPPDMSNLSIKSDQALLGGIFYFLNIFSHGELPPHCEQRFLPCEIGCVKYSLQEGIMADFHSFIHPGEIPRGFRFHCQAASDSSHKIPISNFEFGHDQATVLQNLYKFIHPNPGNWPPIYCKSDDRARVNWCLKRMERASEIRQDLELLTVEDLVVGIYQQKFLKEPSKTWVRSLLDVAMWDYSSNTRCKWHEENDILFCALAVCKKIAYCISNSLATLFGIQLTGAHVPLQDYEASNSVTPKMVVLDAGRYQKLRVESPGFCHFNSYNQEQRSNTSTGYYPSGVKISGPHSSVRGRGITRLLESISNSSNNIHRFSSCETSLSPYTPQKDGYKPFSSFS</sequence>
<proteinExistence type="evidence at protein level"/>
<keyword id="KW-0963">Cytoplasm</keyword>
<keyword id="KW-0217">Developmental protein</keyword>
<keyword id="KW-0221">Differentiation</keyword>
<keyword id="KW-0238">DNA-binding</keyword>
<keyword id="KW-0469">Meiosis</keyword>
<keyword id="KW-0539">Nucleus</keyword>
<keyword id="KW-1185">Reference proteome</keyword>
<keyword id="KW-0694">RNA-binding</keyword>
<keyword id="KW-0943">RNA-mediated gene silencing</keyword>
<keyword id="KW-0744">Spermatogenesis</keyword>
<gene>
    <name evidence="6" type="primary">Mael</name>
</gene>
<dbReference type="EMBL" id="AK077103">
    <property type="protein sequence ID" value="BAC36612.1"/>
    <property type="molecule type" value="mRNA"/>
</dbReference>
<dbReference type="EMBL" id="AK165801">
    <property type="protein sequence ID" value="BAE38386.1"/>
    <property type="molecule type" value="mRNA"/>
</dbReference>
<dbReference type="EMBL" id="BC050800">
    <property type="protein sequence ID" value="AAH50800.1"/>
    <property type="molecule type" value="mRNA"/>
</dbReference>
<dbReference type="CCDS" id="CCDS15448.1"/>
<dbReference type="RefSeq" id="NP_780505.1">
    <property type="nucleotide sequence ID" value="NM_175296.4"/>
</dbReference>
<dbReference type="SMR" id="Q8BVN9"/>
<dbReference type="BioGRID" id="221084">
    <property type="interactions" value="7"/>
</dbReference>
<dbReference type="FunCoup" id="Q8BVN9">
    <property type="interactions" value="210"/>
</dbReference>
<dbReference type="STRING" id="10090.ENSMUSP00000045828"/>
<dbReference type="PhosphoSitePlus" id="Q8BVN9"/>
<dbReference type="SwissPalm" id="Q8BVN9"/>
<dbReference type="PaxDb" id="10090-ENSMUSP00000045828"/>
<dbReference type="ProteomicsDB" id="252712"/>
<dbReference type="Antibodypedia" id="34338">
    <property type="antibodies" value="61 antibodies from 21 providers"/>
</dbReference>
<dbReference type="DNASU" id="98558"/>
<dbReference type="Ensembl" id="ENSMUST00000038782.4">
    <property type="protein sequence ID" value="ENSMUSP00000045828.4"/>
    <property type="gene ID" value="ENSMUSG00000040629.9"/>
</dbReference>
<dbReference type="GeneID" id="98558"/>
<dbReference type="KEGG" id="mmu:98558"/>
<dbReference type="UCSC" id="uc007dkk.1">
    <property type="organism name" value="mouse"/>
</dbReference>
<dbReference type="AGR" id="MGI:2138453"/>
<dbReference type="CTD" id="84944"/>
<dbReference type="MGI" id="MGI:2138453">
    <property type="gene designation" value="Mael"/>
</dbReference>
<dbReference type="VEuPathDB" id="HostDB:ENSMUSG00000040629"/>
<dbReference type="eggNOG" id="ENOG502QTQB">
    <property type="taxonomic scope" value="Eukaryota"/>
</dbReference>
<dbReference type="GeneTree" id="ENSGT00390000003645"/>
<dbReference type="HOGENOM" id="CLU_051692_0_0_1"/>
<dbReference type="InParanoid" id="Q8BVN9"/>
<dbReference type="OMA" id="KHEIFDH"/>
<dbReference type="OrthoDB" id="24555at2759"/>
<dbReference type="PhylomeDB" id="Q8BVN9"/>
<dbReference type="TreeFam" id="TF323573"/>
<dbReference type="BioGRID-ORCS" id="98558">
    <property type="hits" value="2 hits in 81 CRISPR screens"/>
</dbReference>
<dbReference type="CD-CODE" id="DE1E139C">
    <property type="entry name" value="Chromatoid body"/>
</dbReference>
<dbReference type="PRO" id="PR:Q8BVN9"/>
<dbReference type="Proteomes" id="UP000000589">
    <property type="component" value="Chromosome 1"/>
</dbReference>
<dbReference type="RNAct" id="Q8BVN9">
    <property type="molecule type" value="protein"/>
</dbReference>
<dbReference type="Bgee" id="ENSMUSG00000040629">
    <property type="expression patterns" value="Expressed in seminiferous tubule of testis and 32 other cell types or tissues"/>
</dbReference>
<dbReference type="ExpressionAtlas" id="Q8BVN9">
    <property type="expression patterns" value="baseline and differential"/>
</dbReference>
<dbReference type="GO" id="GO:0030849">
    <property type="term" value="C:autosome"/>
    <property type="evidence" value="ECO:0000314"/>
    <property type="project" value="MGI"/>
</dbReference>
<dbReference type="GO" id="GO:0000785">
    <property type="term" value="C:chromatin"/>
    <property type="evidence" value="ECO:0000314"/>
    <property type="project" value="MGI"/>
</dbReference>
<dbReference type="GO" id="GO:0033391">
    <property type="term" value="C:chromatoid body"/>
    <property type="evidence" value="ECO:0000314"/>
    <property type="project" value="MGI"/>
</dbReference>
<dbReference type="GO" id="GO:0005737">
    <property type="term" value="C:cytoplasm"/>
    <property type="evidence" value="ECO:0000314"/>
    <property type="project" value="MGI"/>
</dbReference>
<dbReference type="GO" id="GO:0005829">
    <property type="term" value="C:cytosol"/>
    <property type="evidence" value="ECO:0000304"/>
    <property type="project" value="Reactome"/>
</dbReference>
<dbReference type="GO" id="GO:0001673">
    <property type="term" value="C:male germ cell nucleus"/>
    <property type="evidence" value="ECO:0000314"/>
    <property type="project" value="MGI"/>
</dbReference>
<dbReference type="GO" id="GO:0005654">
    <property type="term" value="C:nucleoplasm"/>
    <property type="evidence" value="ECO:0000304"/>
    <property type="project" value="Reactome"/>
</dbReference>
<dbReference type="GO" id="GO:0043186">
    <property type="term" value="C:P granule"/>
    <property type="evidence" value="ECO:0000314"/>
    <property type="project" value="MGI"/>
</dbReference>
<dbReference type="GO" id="GO:0048471">
    <property type="term" value="C:perinuclear region of cytoplasm"/>
    <property type="evidence" value="ECO:0000314"/>
    <property type="project" value="MGI"/>
</dbReference>
<dbReference type="GO" id="GO:0071547">
    <property type="term" value="C:piP-body"/>
    <property type="evidence" value="ECO:0000314"/>
    <property type="project" value="UniProtKB"/>
</dbReference>
<dbReference type="GO" id="GO:0001741">
    <property type="term" value="C:XY body"/>
    <property type="evidence" value="ECO:0000314"/>
    <property type="project" value="UniProtKB"/>
</dbReference>
<dbReference type="GO" id="GO:0003677">
    <property type="term" value="F:DNA binding"/>
    <property type="evidence" value="ECO:0007669"/>
    <property type="project" value="UniProtKB-KW"/>
</dbReference>
<dbReference type="GO" id="GO:0003723">
    <property type="term" value="F:RNA binding"/>
    <property type="evidence" value="ECO:0007669"/>
    <property type="project" value="UniProtKB-KW"/>
</dbReference>
<dbReference type="GO" id="GO:0006915">
    <property type="term" value="P:apoptotic process"/>
    <property type="evidence" value="ECO:0000315"/>
    <property type="project" value="MGI"/>
</dbReference>
<dbReference type="GO" id="GO:0000902">
    <property type="term" value="P:cell morphogenesis"/>
    <property type="evidence" value="ECO:0000315"/>
    <property type="project" value="MGI"/>
</dbReference>
<dbReference type="GO" id="GO:0006974">
    <property type="term" value="P:DNA damage response"/>
    <property type="evidence" value="ECO:0000315"/>
    <property type="project" value="MGI"/>
</dbReference>
<dbReference type="GO" id="GO:0035234">
    <property type="term" value="P:ectopic germ cell programmed cell death"/>
    <property type="evidence" value="ECO:0000315"/>
    <property type="project" value="MGI"/>
</dbReference>
<dbReference type="GO" id="GO:0009566">
    <property type="term" value="P:fertilization"/>
    <property type="evidence" value="ECO:0000315"/>
    <property type="project" value="MGI"/>
</dbReference>
<dbReference type="GO" id="GO:0010467">
    <property type="term" value="P:gene expression"/>
    <property type="evidence" value="ECO:0000315"/>
    <property type="project" value="MGI"/>
</dbReference>
<dbReference type="GO" id="GO:0007129">
    <property type="term" value="P:homologous chromosome pairing at meiosis"/>
    <property type="evidence" value="ECO:0000315"/>
    <property type="project" value="MGI"/>
</dbReference>
<dbReference type="GO" id="GO:0008630">
    <property type="term" value="P:intrinsic apoptotic signaling pathway in response to DNA damage"/>
    <property type="evidence" value="ECO:0000315"/>
    <property type="project" value="MGI"/>
</dbReference>
<dbReference type="GO" id="GO:0007140">
    <property type="term" value="P:male meiotic nuclear division"/>
    <property type="evidence" value="ECO:0000315"/>
    <property type="project" value="MGI"/>
</dbReference>
<dbReference type="GO" id="GO:0043066">
    <property type="term" value="P:negative regulation of apoptotic process"/>
    <property type="evidence" value="ECO:0000315"/>
    <property type="project" value="MGI"/>
</dbReference>
<dbReference type="GO" id="GO:0051093">
    <property type="term" value="P:negative regulation of developmental process"/>
    <property type="evidence" value="ECO:0000315"/>
    <property type="project" value="MGI"/>
</dbReference>
<dbReference type="GO" id="GO:0010629">
    <property type="term" value="P:negative regulation of gene expression"/>
    <property type="evidence" value="ECO:0000315"/>
    <property type="project" value="MGI"/>
</dbReference>
<dbReference type="GO" id="GO:2000242">
    <property type="term" value="P:negative regulation of reproductive process"/>
    <property type="evidence" value="ECO:0000315"/>
    <property type="project" value="MGI"/>
</dbReference>
<dbReference type="GO" id="GO:0000122">
    <property type="term" value="P:negative regulation of transcription by RNA polymerase II"/>
    <property type="evidence" value="ECO:0000315"/>
    <property type="project" value="MGI"/>
</dbReference>
<dbReference type="GO" id="GO:0034587">
    <property type="term" value="P:piRNA processing"/>
    <property type="evidence" value="ECO:0000315"/>
    <property type="project" value="UniProtKB"/>
</dbReference>
<dbReference type="GO" id="GO:0060964">
    <property type="term" value="P:regulation of miRNA-mediated gene silencing"/>
    <property type="evidence" value="ECO:0007669"/>
    <property type="project" value="InterPro"/>
</dbReference>
<dbReference type="GO" id="GO:0046620">
    <property type="term" value="P:regulation of organ growth"/>
    <property type="evidence" value="ECO:0000315"/>
    <property type="project" value="MGI"/>
</dbReference>
<dbReference type="GO" id="GO:0031047">
    <property type="term" value="P:regulatory ncRNA-mediated gene silencing"/>
    <property type="evidence" value="ECO:0000315"/>
    <property type="project" value="UniProtKB"/>
</dbReference>
<dbReference type="GO" id="GO:0007283">
    <property type="term" value="P:spermatogenesis"/>
    <property type="evidence" value="ECO:0000315"/>
    <property type="project" value="MGI"/>
</dbReference>
<dbReference type="GO" id="GO:0141196">
    <property type="term" value="P:transposable element silencing by piRNA-mediated DNA methylation"/>
    <property type="evidence" value="ECO:0000315"/>
    <property type="project" value="UniProtKB"/>
</dbReference>
<dbReference type="CDD" id="cd21992">
    <property type="entry name" value="HMG-box_MAEL"/>
    <property type="match status" value="1"/>
</dbReference>
<dbReference type="FunFam" id="1.10.30.10:FF:000035">
    <property type="entry name" value="Maelstrom spermatogenic transposon silencer"/>
    <property type="match status" value="1"/>
</dbReference>
<dbReference type="Gene3D" id="1.10.30.10">
    <property type="entry name" value="High mobility group box domain"/>
    <property type="match status" value="1"/>
</dbReference>
<dbReference type="InterPro" id="IPR009071">
    <property type="entry name" value="HMG_box_dom"/>
</dbReference>
<dbReference type="InterPro" id="IPR036910">
    <property type="entry name" value="HMG_box_dom_sf"/>
</dbReference>
<dbReference type="InterPro" id="IPR024970">
    <property type="entry name" value="Maelstrom"/>
</dbReference>
<dbReference type="InterPro" id="IPR039259">
    <property type="entry name" value="Protein_maelstrom"/>
</dbReference>
<dbReference type="PANTHER" id="PTHR21358">
    <property type="entry name" value="PROTEIN MAELSTROM HOMOLOG"/>
    <property type="match status" value="1"/>
</dbReference>
<dbReference type="PANTHER" id="PTHR21358:SF4">
    <property type="entry name" value="PROTEIN MAELSTROM HOMOLOG"/>
    <property type="match status" value="1"/>
</dbReference>
<dbReference type="Pfam" id="PF09011">
    <property type="entry name" value="HMG_box_2"/>
    <property type="match status" value="1"/>
</dbReference>
<dbReference type="Pfam" id="PF13017">
    <property type="entry name" value="Maelstrom"/>
    <property type="match status" value="1"/>
</dbReference>
<dbReference type="SUPFAM" id="SSF47095">
    <property type="entry name" value="HMG-box"/>
    <property type="match status" value="1"/>
</dbReference>
<evidence type="ECO:0000269" key="1">
    <source>
    </source>
</evidence>
<evidence type="ECO:0000269" key="2">
    <source>
    </source>
</evidence>
<evidence type="ECO:0000269" key="3">
    <source>
    </source>
</evidence>
<evidence type="ECO:0000269" key="4">
    <source>
    </source>
</evidence>
<evidence type="ECO:0000305" key="5"/>
<evidence type="ECO:0000312" key="6">
    <source>
        <dbReference type="MGI" id="MGI:2138453"/>
    </source>
</evidence>
<protein>
    <recommendedName>
        <fullName evidence="5">Protein maelstrom homolog</fullName>
    </recommendedName>
</protein>
<accession>Q8BVN9</accession>
<name>MAEL_MOUSE</name>
<comment type="function">
    <text evidence="2 3">Plays a central role during spermatogenesis by repressing transposable elements and preventing their mobilization, which is essential for the germline integrity. Acts via the piRNA metabolic process, which mediates the repression of transposable elements during meiosis by forming complexes composed of piRNAs and Piwi proteins and governs the methylation and subsequent repression of transposons. Its association with piP-bodies suggests a participation in the secondary piRNAs metabolic process. Required for the localization of germ-cell factors to the meiotic nuage.</text>
</comment>
<comment type="subunit">
    <text evidence="1 4">Interacts with SMARCB1, SIN3B and DDX4. Interacts with piRNA-associated proteins TDRD1, PIWIL1 and PIWIL2. Interacts with Tex19.1 and, probably, Tex19.2 (PubMed:28254886).</text>
</comment>
<comment type="subcellular location">
    <subcellularLocation>
        <location evidence="2 3">Cytoplasm</location>
    </subcellularLocation>
    <subcellularLocation>
        <location evidence="1 2">Nucleus</location>
    </subcellularLocation>
    <text evidence="1 2 3">Component of the meiotic nuage, also named P granule, a germ-cell-specific organelle required to repress transposon activity during meiosis. Recruited to perinuclear nuage during spermatogenesis. Specifically localizes to piP-bodies, a subset of the nuage which contains secondary piRNAs. PIWIL2 is required for its localization to piP-bodies. PubMed:16787967, reported an association with the nuclear XY body, however, PubMed:18694567 showed that it is not the case because the antibody used by PubMed:16787967 still stains the nuclear XY body in spermatocytes lacking Mael. Moreover other antibodies raized against the same epitope used in PubMed:16787967 do not recognize any epitopes on XY chromosomes but show a clear localization to the meiotic nuage.</text>
</comment>
<comment type="tissue specificity">
    <text evidence="1 2">Testis-specific. Present in spermatocytes and round and early elongating spermatids.</text>
</comment>
<comment type="developmental stage">
    <text evidence="1">Present from 12.5 dpc, although at this stage, protein levels are low. In the male, from 12.5 until 14.5 cpc, it localizes to the cytoplasm of germ cells, but from 15.5-16.5 dpc, it localizes to the nucleus as well. In the female, it is cytoplasmic in germ cells throughout embryonic gonad development (at protein level). In testis, low levels are observed in the early stages of meiotic prophase I (leptonema to midpachynema). Starts to accumulate throughout the cytoplasm and in prominent perinuclear nuage in late pachytene and diplotene spermatocytes. Meiotic metaphases and secondary spermatocytes show a high level in the cytoplasm as well as in nuage. Present in the chromatoid body and in a second smaller nuage in round spermatids (at protein level).</text>
</comment>
<comment type="disruption phenotype">
    <text evidence="2 3">Mice are viable but show profound defect in synapsis of homologous chromosomes in male meiosis, piRNA production defects, DNA demethylation of LINE-1 (L1) transposable elements and a 100-fold increase in L1 expression in the adult testis. In the adult testes, L1 transposon derepression occurs at the onset of meiosis. As a result, spermatocytes are flooded with L1 ribonucleoproteins (RNPs) that accumulates in large cytoplasmic enclaves and nuclei. Spermatocytes with nuclear L1 RNPs exhibit massive DNA damage and severe chromosome asynapsis. In gonocytes, PIWIL4, TDRD9, and DDX4 are lost from piP-bodies, whereas no effects on pi-body composition are observed.</text>
</comment>
<comment type="similarity">
    <text evidence="5">Belongs to the maelstrom family.</text>
</comment>
<reference key="1">
    <citation type="journal article" date="2005" name="Science">
        <title>The transcriptional landscape of the mammalian genome.</title>
        <authorList>
            <person name="Carninci P."/>
            <person name="Kasukawa T."/>
            <person name="Katayama S."/>
            <person name="Gough J."/>
            <person name="Frith M.C."/>
            <person name="Maeda N."/>
            <person name="Oyama R."/>
            <person name="Ravasi T."/>
            <person name="Lenhard B."/>
            <person name="Wells C."/>
            <person name="Kodzius R."/>
            <person name="Shimokawa K."/>
            <person name="Bajic V.B."/>
            <person name="Brenner S.E."/>
            <person name="Batalov S."/>
            <person name="Forrest A.R."/>
            <person name="Zavolan M."/>
            <person name="Davis M.J."/>
            <person name="Wilming L.G."/>
            <person name="Aidinis V."/>
            <person name="Allen J.E."/>
            <person name="Ambesi-Impiombato A."/>
            <person name="Apweiler R."/>
            <person name="Aturaliya R.N."/>
            <person name="Bailey T.L."/>
            <person name="Bansal M."/>
            <person name="Baxter L."/>
            <person name="Beisel K.W."/>
            <person name="Bersano T."/>
            <person name="Bono H."/>
            <person name="Chalk A.M."/>
            <person name="Chiu K.P."/>
            <person name="Choudhary V."/>
            <person name="Christoffels A."/>
            <person name="Clutterbuck D.R."/>
            <person name="Crowe M.L."/>
            <person name="Dalla E."/>
            <person name="Dalrymple B.P."/>
            <person name="de Bono B."/>
            <person name="Della Gatta G."/>
            <person name="di Bernardo D."/>
            <person name="Down T."/>
            <person name="Engstrom P."/>
            <person name="Fagiolini M."/>
            <person name="Faulkner G."/>
            <person name="Fletcher C.F."/>
            <person name="Fukushima T."/>
            <person name="Furuno M."/>
            <person name="Futaki S."/>
            <person name="Gariboldi M."/>
            <person name="Georgii-Hemming P."/>
            <person name="Gingeras T.R."/>
            <person name="Gojobori T."/>
            <person name="Green R.E."/>
            <person name="Gustincich S."/>
            <person name="Harbers M."/>
            <person name="Hayashi Y."/>
            <person name="Hensch T.K."/>
            <person name="Hirokawa N."/>
            <person name="Hill D."/>
            <person name="Huminiecki L."/>
            <person name="Iacono M."/>
            <person name="Ikeo K."/>
            <person name="Iwama A."/>
            <person name="Ishikawa T."/>
            <person name="Jakt M."/>
            <person name="Kanapin A."/>
            <person name="Katoh M."/>
            <person name="Kawasawa Y."/>
            <person name="Kelso J."/>
            <person name="Kitamura H."/>
            <person name="Kitano H."/>
            <person name="Kollias G."/>
            <person name="Krishnan S.P."/>
            <person name="Kruger A."/>
            <person name="Kummerfeld S.K."/>
            <person name="Kurochkin I.V."/>
            <person name="Lareau L.F."/>
            <person name="Lazarevic D."/>
            <person name="Lipovich L."/>
            <person name="Liu J."/>
            <person name="Liuni S."/>
            <person name="McWilliam S."/>
            <person name="Madan Babu M."/>
            <person name="Madera M."/>
            <person name="Marchionni L."/>
            <person name="Matsuda H."/>
            <person name="Matsuzawa S."/>
            <person name="Miki H."/>
            <person name="Mignone F."/>
            <person name="Miyake S."/>
            <person name="Morris K."/>
            <person name="Mottagui-Tabar S."/>
            <person name="Mulder N."/>
            <person name="Nakano N."/>
            <person name="Nakauchi H."/>
            <person name="Ng P."/>
            <person name="Nilsson R."/>
            <person name="Nishiguchi S."/>
            <person name="Nishikawa S."/>
            <person name="Nori F."/>
            <person name="Ohara O."/>
            <person name="Okazaki Y."/>
            <person name="Orlando V."/>
            <person name="Pang K.C."/>
            <person name="Pavan W.J."/>
            <person name="Pavesi G."/>
            <person name="Pesole G."/>
            <person name="Petrovsky N."/>
            <person name="Piazza S."/>
            <person name="Reed J."/>
            <person name="Reid J.F."/>
            <person name="Ring B.Z."/>
            <person name="Ringwald M."/>
            <person name="Rost B."/>
            <person name="Ruan Y."/>
            <person name="Salzberg S.L."/>
            <person name="Sandelin A."/>
            <person name="Schneider C."/>
            <person name="Schoenbach C."/>
            <person name="Sekiguchi K."/>
            <person name="Semple C.A."/>
            <person name="Seno S."/>
            <person name="Sessa L."/>
            <person name="Sheng Y."/>
            <person name="Shibata Y."/>
            <person name="Shimada H."/>
            <person name="Shimada K."/>
            <person name="Silva D."/>
            <person name="Sinclair B."/>
            <person name="Sperling S."/>
            <person name="Stupka E."/>
            <person name="Sugiura K."/>
            <person name="Sultana R."/>
            <person name="Takenaka Y."/>
            <person name="Taki K."/>
            <person name="Tammoja K."/>
            <person name="Tan S.L."/>
            <person name="Tang S."/>
            <person name="Taylor M.S."/>
            <person name="Tegner J."/>
            <person name="Teichmann S.A."/>
            <person name="Ueda H.R."/>
            <person name="van Nimwegen E."/>
            <person name="Verardo R."/>
            <person name="Wei C.L."/>
            <person name="Yagi K."/>
            <person name="Yamanishi H."/>
            <person name="Zabarovsky E."/>
            <person name="Zhu S."/>
            <person name="Zimmer A."/>
            <person name="Hide W."/>
            <person name="Bult C."/>
            <person name="Grimmond S.M."/>
            <person name="Teasdale R.D."/>
            <person name="Liu E.T."/>
            <person name="Brusic V."/>
            <person name="Quackenbush J."/>
            <person name="Wahlestedt C."/>
            <person name="Mattick J.S."/>
            <person name="Hume D.A."/>
            <person name="Kai C."/>
            <person name="Sasaki D."/>
            <person name="Tomaru Y."/>
            <person name="Fukuda S."/>
            <person name="Kanamori-Katayama M."/>
            <person name="Suzuki M."/>
            <person name="Aoki J."/>
            <person name="Arakawa T."/>
            <person name="Iida J."/>
            <person name="Imamura K."/>
            <person name="Itoh M."/>
            <person name="Kato T."/>
            <person name="Kawaji H."/>
            <person name="Kawagashira N."/>
            <person name="Kawashima T."/>
            <person name="Kojima M."/>
            <person name="Kondo S."/>
            <person name="Konno H."/>
            <person name="Nakano K."/>
            <person name="Ninomiya N."/>
            <person name="Nishio T."/>
            <person name="Okada M."/>
            <person name="Plessy C."/>
            <person name="Shibata K."/>
            <person name="Shiraki T."/>
            <person name="Suzuki S."/>
            <person name="Tagami M."/>
            <person name="Waki K."/>
            <person name="Watahiki A."/>
            <person name="Okamura-Oho Y."/>
            <person name="Suzuki H."/>
            <person name="Kawai J."/>
            <person name="Hayashizaki Y."/>
        </authorList>
    </citation>
    <scope>NUCLEOTIDE SEQUENCE [LARGE SCALE MRNA]</scope>
    <source>
        <strain>C57BL/6J</strain>
        <tissue>Testis</tissue>
    </source>
</reference>
<reference key="2">
    <citation type="journal article" date="2004" name="Genome Res.">
        <title>The status, quality, and expansion of the NIH full-length cDNA project: the Mammalian Gene Collection (MGC).</title>
        <authorList>
            <consortium name="The MGC Project Team"/>
        </authorList>
    </citation>
    <scope>NUCLEOTIDE SEQUENCE [LARGE SCALE MRNA]</scope>
    <source>
        <tissue>Testis</tissue>
    </source>
</reference>
<reference key="3">
    <citation type="journal article" date="2006" name="Hum. Mol. Genet.">
        <title>Mouse MAELSTROM: the link between meiotic silencing of unsynapsed chromatin and microRNA pathway?</title>
        <authorList>
            <person name="Costa Y."/>
            <person name="Speed R.M."/>
            <person name="Gautier P."/>
            <person name="Semple C.A."/>
            <person name="Maratou K."/>
            <person name="Turner J.M.A."/>
            <person name="Cooke H.J."/>
        </authorList>
    </citation>
    <scope>SUBCELLULAR LOCATION</scope>
    <scope>TISSUE SPECIFICITY</scope>
    <scope>DEVELOPMENTAL STAGE</scope>
    <scope>INTERACTION WITH SMARCB1; SIN3B; DDX4; PIWIL1; PIWIL2 AND TDRD1</scope>
</reference>
<reference key="4">
    <citation type="journal article" date="2008" name="Dev. Cell">
        <title>Mouse maelstrom, a component of nuage, is essential for spermatogenesis and transposon repression in meiosis.</title>
        <authorList>
            <person name="Soper S.F.C."/>
            <person name="van der Heijden G.W."/>
            <person name="Hardiman T.C."/>
            <person name="Goodheart M."/>
            <person name="Martin S.L."/>
            <person name="de Boer P."/>
            <person name="Bortvin A."/>
        </authorList>
    </citation>
    <scope>FUNCTION</scope>
    <scope>SUBCELLULAR LOCATION</scope>
    <scope>TISSUE SPECIFICITY</scope>
    <scope>DISRUPTION PHENOTYPE</scope>
</reference>
<reference key="5">
    <citation type="journal article" date="2009" name="PLoS Genet.">
        <title>Cytoplasmic compartmentalization of the fetal piRNA pathway in mice.</title>
        <authorList>
            <person name="Aravin A.A."/>
            <person name="van der Heijden G.W."/>
            <person name="Castaneda J."/>
            <person name="Vagin V.V."/>
            <person name="Hannon G.J."/>
            <person name="Bortvin A."/>
        </authorList>
    </citation>
    <scope>FUNCTION</scope>
    <scope>SUBCELLULAR LOCATION</scope>
    <scope>DISRUPTION PHENOTYPE</scope>
</reference>
<reference key="6">
    <citation type="journal article" date="2010" name="Cell">
        <title>A tissue-specific atlas of mouse protein phosphorylation and expression.</title>
        <authorList>
            <person name="Huttlin E.L."/>
            <person name="Jedrychowski M.P."/>
            <person name="Elias J.E."/>
            <person name="Goswami T."/>
            <person name="Rad R."/>
            <person name="Beausoleil S.A."/>
            <person name="Villen J."/>
            <person name="Haas W."/>
            <person name="Sowa M.E."/>
            <person name="Gygi S.P."/>
        </authorList>
    </citation>
    <scope>IDENTIFICATION BY MASS SPECTROMETRY [LARGE SCALE ANALYSIS]</scope>
    <source>
        <tissue>Testis</tissue>
    </source>
</reference>
<reference key="7">
    <citation type="journal article" date="2017" name="J. Cell Sci.">
        <title>Tex19 paralogs are new members of the piRNA pathway controlling retrotransposon suppression.</title>
        <authorList>
            <person name="Tarabay Y."/>
            <person name="Achour M."/>
            <person name="Teletin M."/>
            <person name="Ye T."/>
            <person name="Teissandier A."/>
            <person name="Mark M."/>
            <person name="Bourc'his D."/>
            <person name="Viville S."/>
        </authorList>
    </citation>
    <scope>INTERACTION WITH TEX19.1</scope>
</reference>
<feature type="chain" id="PRO_0000232503" description="Protein maelstrom homolog">
    <location>
        <begin position="1"/>
        <end position="434"/>
    </location>
</feature>
<feature type="DNA-binding region" description="HMG box">
    <location>
        <begin position="4"/>
        <end position="73"/>
    </location>
</feature>
<organism>
    <name type="scientific">Mus musculus</name>
    <name type="common">Mouse</name>
    <dbReference type="NCBI Taxonomy" id="10090"/>
    <lineage>
        <taxon>Eukaryota</taxon>
        <taxon>Metazoa</taxon>
        <taxon>Chordata</taxon>
        <taxon>Craniata</taxon>
        <taxon>Vertebrata</taxon>
        <taxon>Euteleostomi</taxon>
        <taxon>Mammalia</taxon>
        <taxon>Eutheria</taxon>
        <taxon>Euarchontoglires</taxon>
        <taxon>Glires</taxon>
        <taxon>Rodentia</taxon>
        <taxon>Myomorpha</taxon>
        <taxon>Muroidea</taxon>
        <taxon>Muridae</taxon>
        <taxon>Murinae</taxon>
        <taxon>Mus</taxon>
        <taxon>Mus</taxon>
    </lineage>
</organism>